<feature type="chain" id="PRO_0000212436" description="Tubulin--tyrosine ligase">
    <location>
        <begin position="1"/>
        <end position="379"/>
    </location>
</feature>
<feature type="domain" description="TTL" evidence="3">
    <location>
        <begin position="3"/>
        <end position="370"/>
    </location>
</feature>
<comment type="function">
    <text evidence="2">Catalyzes the post-translational addition of a tyrosine to the C-terminal end of detyrosinated alpha-tubulin.</text>
</comment>
<comment type="catalytic activity">
    <reaction evidence="2">
        <text>C-terminal L-alpha-aminoacyl-L-glutamyl-L-glutamyl-[tubulin] + L-tyrosine + ATP = C-terminal L-alpha-aminoacyl-L-glutamyl-L-glutamyl-L-tyrosyl-[tubulin] + ADP + phosphate + H(+)</text>
        <dbReference type="Rhea" id="RHEA:17605"/>
        <dbReference type="Rhea" id="RHEA-COMP:16434"/>
        <dbReference type="Rhea" id="RHEA-COMP:16435"/>
        <dbReference type="ChEBI" id="CHEBI:15378"/>
        <dbReference type="ChEBI" id="CHEBI:30616"/>
        <dbReference type="ChEBI" id="CHEBI:43474"/>
        <dbReference type="ChEBI" id="CHEBI:58315"/>
        <dbReference type="ChEBI" id="CHEBI:149554"/>
        <dbReference type="ChEBI" id="CHEBI:149555"/>
        <dbReference type="ChEBI" id="CHEBI:456216"/>
        <dbReference type="EC" id="6.3.2.25"/>
    </reaction>
</comment>
<comment type="cofactor">
    <cofactor evidence="1">
        <name>Mg(2+)</name>
        <dbReference type="ChEBI" id="CHEBI:18420"/>
    </cofactor>
</comment>
<comment type="cofactor">
    <cofactor evidence="1">
        <name>K(+)</name>
        <dbReference type="ChEBI" id="CHEBI:29103"/>
    </cofactor>
</comment>
<comment type="subunit">
    <text evidence="1">Monomer.</text>
</comment>
<comment type="similarity">
    <text evidence="4">Belongs to the tubulin--tyrosine ligase family.</text>
</comment>
<keyword id="KW-0067">ATP-binding</keyword>
<keyword id="KW-0903">Direct protein sequencing</keyword>
<keyword id="KW-0436">Ligase</keyword>
<keyword id="KW-0460">Magnesium</keyword>
<keyword id="KW-0547">Nucleotide-binding</keyword>
<keyword id="KW-0630">Potassium</keyword>
<keyword id="KW-1185">Reference proteome</keyword>
<accession>P38160</accession>
<organism>
    <name type="scientific">Sus scrofa</name>
    <name type="common">Pig</name>
    <dbReference type="NCBI Taxonomy" id="9823"/>
    <lineage>
        <taxon>Eukaryota</taxon>
        <taxon>Metazoa</taxon>
        <taxon>Chordata</taxon>
        <taxon>Craniata</taxon>
        <taxon>Vertebrata</taxon>
        <taxon>Euteleostomi</taxon>
        <taxon>Mammalia</taxon>
        <taxon>Eutheria</taxon>
        <taxon>Laurasiatheria</taxon>
        <taxon>Artiodactyla</taxon>
        <taxon>Suina</taxon>
        <taxon>Suidae</taxon>
        <taxon>Sus</taxon>
    </lineage>
</organism>
<evidence type="ECO:0000250" key="1">
    <source>
        <dbReference type="UniProtKB" id="P38584"/>
    </source>
</evidence>
<evidence type="ECO:0000250" key="2">
    <source>
        <dbReference type="UniProtKB" id="Q9QXJ0"/>
    </source>
</evidence>
<evidence type="ECO:0000255" key="3">
    <source>
        <dbReference type="PROSITE-ProRule" id="PRU00568"/>
    </source>
</evidence>
<evidence type="ECO:0000305" key="4"/>
<reference key="1">
    <citation type="journal article" date="1993" name="J. Cell Biol.">
        <title>Characterization of the tubulin-tyrosine ligase.</title>
        <authorList>
            <person name="Ersfeld K."/>
            <person name="Wehland J."/>
            <person name="Plessmann U."/>
            <person name="Dodemont H."/>
            <person name="Gerke V."/>
            <person name="Weber K."/>
        </authorList>
    </citation>
    <scope>NUCLEOTIDE SEQUENCE [MRNA]</scope>
    <scope>PARTIAL PROTEIN SEQUENCE</scope>
    <source>
        <tissue>Brain</tissue>
    </source>
</reference>
<dbReference type="EC" id="6.3.2.25" evidence="2"/>
<dbReference type="EMBL" id="X68453">
    <property type="protein sequence ID" value="CAA48494.1"/>
    <property type="molecule type" value="mRNA"/>
</dbReference>
<dbReference type="PIR" id="A45443">
    <property type="entry name" value="A45443"/>
</dbReference>
<dbReference type="RefSeq" id="NP_001004041.1">
    <property type="nucleotide sequence ID" value="NM_001004041.1"/>
</dbReference>
<dbReference type="SMR" id="P38160"/>
<dbReference type="FunCoup" id="P38160">
    <property type="interactions" value="623"/>
</dbReference>
<dbReference type="STRING" id="9823.ENSSSCP00000040869"/>
<dbReference type="PaxDb" id="9823-ENSSSCP00000008644"/>
<dbReference type="Ensembl" id="ENSSSCT00000008870.5">
    <property type="protein sequence ID" value="ENSSSCP00000008644.4"/>
    <property type="gene ID" value="ENSSSCG00000008097.5"/>
</dbReference>
<dbReference type="Ensembl" id="ENSSSCT00025005277.1">
    <property type="protein sequence ID" value="ENSSSCP00025002037.1"/>
    <property type="gene ID" value="ENSSSCG00025003981.1"/>
</dbReference>
<dbReference type="Ensembl" id="ENSSSCT00045033729.1">
    <property type="protein sequence ID" value="ENSSSCP00045023389.1"/>
    <property type="gene ID" value="ENSSSCG00045019764.1"/>
</dbReference>
<dbReference type="Ensembl" id="ENSSSCT00050105059.1">
    <property type="protein sequence ID" value="ENSSSCP00050046153.1"/>
    <property type="gene ID" value="ENSSSCG00050076474.1"/>
</dbReference>
<dbReference type="Ensembl" id="ENSSSCT00065085571.1">
    <property type="protein sequence ID" value="ENSSSCP00065037402.1"/>
    <property type="gene ID" value="ENSSSCG00065062368.1"/>
</dbReference>
<dbReference type="Ensembl" id="ENSSSCT00070045327.1">
    <property type="protein sequence ID" value="ENSSSCP00070038207.1"/>
    <property type="gene ID" value="ENSSSCG00070022661.1"/>
</dbReference>
<dbReference type="Ensembl" id="ENSSSCT00090057429">
    <property type="protein sequence ID" value="ENSSSCP00090035830"/>
    <property type="gene ID" value="ENSSSCG00090032444"/>
</dbReference>
<dbReference type="Ensembl" id="ENSSSCT00105048405">
    <property type="protein sequence ID" value="ENSSSCP00105033957"/>
    <property type="gene ID" value="ENSSSCG00105025520"/>
</dbReference>
<dbReference type="Ensembl" id="ENSSSCT00115019277">
    <property type="protein sequence ID" value="ENSSSCP00115018234"/>
    <property type="gene ID" value="ENSSSCG00115011176"/>
</dbReference>
<dbReference type="Ensembl" id="ENSSSCT00130039219">
    <property type="protein sequence ID" value="ENSSSCP00130027619"/>
    <property type="gene ID" value="ENSSSCG00130020215"/>
</dbReference>
<dbReference type="GeneID" id="445530"/>
<dbReference type="KEGG" id="ssc:445530"/>
<dbReference type="CTD" id="150465"/>
<dbReference type="eggNOG" id="KOG2157">
    <property type="taxonomic scope" value="Eukaryota"/>
</dbReference>
<dbReference type="GeneTree" id="ENSGT00940000164409"/>
<dbReference type="HOGENOM" id="CLU_010131_2_0_1"/>
<dbReference type="InParanoid" id="P38160"/>
<dbReference type="OMA" id="LDKTCHL"/>
<dbReference type="OrthoDB" id="202825at2759"/>
<dbReference type="TreeFam" id="TF350555"/>
<dbReference type="Proteomes" id="UP000008227">
    <property type="component" value="Chromosome 3"/>
</dbReference>
<dbReference type="Proteomes" id="UP000314985">
    <property type="component" value="Chromosome 3"/>
</dbReference>
<dbReference type="Proteomes" id="UP000694570">
    <property type="component" value="Unplaced"/>
</dbReference>
<dbReference type="Proteomes" id="UP000694571">
    <property type="component" value="Unplaced"/>
</dbReference>
<dbReference type="Proteomes" id="UP000694720">
    <property type="component" value="Unplaced"/>
</dbReference>
<dbReference type="Proteomes" id="UP000694722">
    <property type="component" value="Unplaced"/>
</dbReference>
<dbReference type="Proteomes" id="UP000694723">
    <property type="component" value="Unplaced"/>
</dbReference>
<dbReference type="Proteomes" id="UP000694724">
    <property type="component" value="Unplaced"/>
</dbReference>
<dbReference type="Proteomes" id="UP000694725">
    <property type="component" value="Unplaced"/>
</dbReference>
<dbReference type="Proteomes" id="UP000694726">
    <property type="component" value="Unplaced"/>
</dbReference>
<dbReference type="Proteomes" id="UP000694727">
    <property type="component" value="Unplaced"/>
</dbReference>
<dbReference type="Proteomes" id="UP000694728">
    <property type="component" value="Unplaced"/>
</dbReference>
<dbReference type="Bgee" id="ENSSSCG00000008097">
    <property type="expression patterns" value="Expressed in occipital cortex and 45 other cell types or tissues"/>
</dbReference>
<dbReference type="ExpressionAtlas" id="P38160">
    <property type="expression patterns" value="baseline and differential"/>
</dbReference>
<dbReference type="GO" id="GO:0005876">
    <property type="term" value="C:spindle microtubule"/>
    <property type="evidence" value="ECO:0000318"/>
    <property type="project" value="GO_Central"/>
</dbReference>
<dbReference type="GO" id="GO:0005524">
    <property type="term" value="F:ATP binding"/>
    <property type="evidence" value="ECO:0007669"/>
    <property type="project" value="UniProtKB-KW"/>
</dbReference>
<dbReference type="GO" id="GO:0004835">
    <property type="term" value="F:tubulin-tyrosine ligase activity"/>
    <property type="evidence" value="ECO:0000318"/>
    <property type="project" value="GO_Central"/>
</dbReference>
<dbReference type="GO" id="GO:0000226">
    <property type="term" value="P:microtubule cytoskeleton organization"/>
    <property type="evidence" value="ECO:0000318"/>
    <property type="project" value="GO_Central"/>
</dbReference>
<dbReference type="GO" id="GO:0036211">
    <property type="term" value="P:protein modification process"/>
    <property type="evidence" value="ECO:0007669"/>
    <property type="project" value="InterPro"/>
</dbReference>
<dbReference type="FunFam" id="3.30.470.20:FF:000049">
    <property type="entry name" value="tubulin--tyrosine ligase"/>
    <property type="match status" value="1"/>
</dbReference>
<dbReference type="FunFam" id="3.40.50.11480:FF:000001">
    <property type="entry name" value="tubulin--tyrosine ligase"/>
    <property type="match status" value="1"/>
</dbReference>
<dbReference type="Gene3D" id="3.40.50.11480">
    <property type="match status" value="1"/>
</dbReference>
<dbReference type="Gene3D" id="3.30.470.20">
    <property type="entry name" value="ATP-grasp fold, B domain"/>
    <property type="match status" value="1"/>
</dbReference>
<dbReference type="InterPro" id="IPR004344">
    <property type="entry name" value="TTL/TTLL_fam"/>
</dbReference>
<dbReference type="InterPro" id="IPR052492">
    <property type="entry name" value="Tubulin-tyrosine_ligase"/>
</dbReference>
<dbReference type="PANTHER" id="PTHR46570">
    <property type="entry name" value="TUBULIN--TYROSINE LIGASE"/>
    <property type="match status" value="1"/>
</dbReference>
<dbReference type="PANTHER" id="PTHR46570:SF1">
    <property type="entry name" value="TUBULIN--TYROSINE LIGASE"/>
    <property type="match status" value="1"/>
</dbReference>
<dbReference type="Pfam" id="PF03133">
    <property type="entry name" value="TTL"/>
    <property type="match status" value="1"/>
</dbReference>
<dbReference type="SUPFAM" id="SSF56059">
    <property type="entry name" value="Glutathione synthetase ATP-binding domain-like"/>
    <property type="match status" value="1"/>
</dbReference>
<dbReference type="PROSITE" id="PS51221">
    <property type="entry name" value="TTL"/>
    <property type="match status" value="1"/>
</dbReference>
<proteinExistence type="evidence at protein level"/>
<gene>
    <name type="primary">TTL</name>
</gene>
<sequence>MYTFVVRDENSSVYAEVSRLLLATGHWKRLRRDNPRFNLMLGERNRLPFGRLGHEPGLMQLVNYYRGADKLCRKASLVKLIKTSPELAESCTWFPESYVIYPTNLKTPVAPAQNGIHPPIHSSRTDEREFFLTSYNKKKEDGEGNVWIAKSSAGAKGEGILISSEATELLDFIDNQGQVHVIQKYLERPLLLEPGHRKFDIRSWVLVDHQYNIYLYREGVLRTASEPYHTDNFQDKTCHLTNHCIQKEYSKNYGKYEEGNEMFFEEFNQYLTSALNITLESSILLQIKHIIRSCLLSVEPAISTRHLPYQSFQLFGFDFMVDEDLKVWLIEVNGAPACAQKLYAELCQGIVDIAIASVFPPPDAEQQQQQPPPAAFIKL</sequence>
<name>TTL_PIG</name>
<protein>
    <recommendedName>
        <fullName>Tubulin--tyrosine ligase</fullName>
        <shortName>TTL</shortName>
        <ecNumber evidence="2">6.3.2.25</ecNumber>
    </recommendedName>
</protein>